<accession>Q0G9G2</accession>
<feature type="chain" id="PRO_0000276974" description="Small ribosomal subunit protein uS15c">
    <location>
        <begin position="1"/>
        <end position="90"/>
    </location>
</feature>
<geneLocation type="chloroplast"/>
<sequence>MVKNSFISVIPQEEKEKNKGSVEFQVFSFTNKIRRLTSHLELHRKDYLSQRGLRKILGKRQRLLAYLSKKNRVRYKELIGRLDIREPKTR</sequence>
<keyword id="KW-0150">Chloroplast</keyword>
<keyword id="KW-0934">Plastid</keyword>
<keyword id="KW-0687">Ribonucleoprotein</keyword>
<keyword id="KW-0689">Ribosomal protein</keyword>
<proteinExistence type="inferred from homology"/>
<gene>
    <name type="primary">rps15</name>
</gene>
<evidence type="ECO:0000250" key="1"/>
<evidence type="ECO:0000305" key="2"/>
<dbReference type="EMBL" id="DQ899947">
    <property type="protein sequence ID" value="ABI32566.1"/>
    <property type="molecule type" value="Genomic_DNA"/>
</dbReference>
<dbReference type="RefSeq" id="YP_740259.1">
    <property type="nucleotide sequence ID" value="NC_008326.1"/>
</dbReference>
<dbReference type="SMR" id="Q0G9G2"/>
<dbReference type="GeneID" id="4266691"/>
<dbReference type="GO" id="GO:0009507">
    <property type="term" value="C:chloroplast"/>
    <property type="evidence" value="ECO:0007669"/>
    <property type="project" value="UniProtKB-SubCell"/>
</dbReference>
<dbReference type="GO" id="GO:1990904">
    <property type="term" value="C:ribonucleoprotein complex"/>
    <property type="evidence" value="ECO:0007669"/>
    <property type="project" value="UniProtKB-KW"/>
</dbReference>
<dbReference type="GO" id="GO:0005840">
    <property type="term" value="C:ribosome"/>
    <property type="evidence" value="ECO:0007669"/>
    <property type="project" value="UniProtKB-KW"/>
</dbReference>
<dbReference type="GO" id="GO:0003735">
    <property type="term" value="F:structural constituent of ribosome"/>
    <property type="evidence" value="ECO:0007669"/>
    <property type="project" value="InterPro"/>
</dbReference>
<dbReference type="GO" id="GO:0006412">
    <property type="term" value="P:translation"/>
    <property type="evidence" value="ECO:0007669"/>
    <property type="project" value="UniProtKB-UniRule"/>
</dbReference>
<dbReference type="CDD" id="cd00353">
    <property type="entry name" value="Ribosomal_S15p_S13e"/>
    <property type="match status" value="1"/>
</dbReference>
<dbReference type="Gene3D" id="1.10.287.10">
    <property type="entry name" value="S15/NS1, RNA-binding"/>
    <property type="match status" value="1"/>
</dbReference>
<dbReference type="HAMAP" id="MF_01343_B">
    <property type="entry name" value="Ribosomal_uS15_B"/>
    <property type="match status" value="1"/>
</dbReference>
<dbReference type="InterPro" id="IPR000589">
    <property type="entry name" value="Ribosomal_uS15"/>
</dbReference>
<dbReference type="InterPro" id="IPR005290">
    <property type="entry name" value="Ribosomal_uS15_bac-type"/>
</dbReference>
<dbReference type="InterPro" id="IPR009068">
    <property type="entry name" value="uS15_NS1_RNA-bd_sf"/>
</dbReference>
<dbReference type="NCBIfam" id="TIGR00952">
    <property type="entry name" value="S15_bact"/>
    <property type="match status" value="1"/>
</dbReference>
<dbReference type="PANTHER" id="PTHR23321">
    <property type="entry name" value="RIBOSOMAL PROTEIN S15, BACTERIAL AND ORGANELLAR"/>
    <property type="match status" value="1"/>
</dbReference>
<dbReference type="PANTHER" id="PTHR23321:SF26">
    <property type="entry name" value="SMALL RIBOSOMAL SUBUNIT PROTEIN US15M"/>
    <property type="match status" value="1"/>
</dbReference>
<dbReference type="Pfam" id="PF00312">
    <property type="entry name" value="Ribosomal_S15"/>
    <property type="match status" value="1"/>
</dbReference>
<dbReference type="SMART" id="SM01387">
    <property type="entry name" value="Ribosomal_S15"/>
    <property type="match status" value="1"/>
</dbReference>
<dbReference type="SUPFAM" id="SSF47060">
    <property type="entry name" value="S15/NS1 RNA-binding domain"/>
    <property type="match status" value="1"/>
</dbReference>
<dbReference type="PROSITE" id="PS00362">
    <property type="entry name" value="RIBOSOMAL_S15"/>
    <property type="match status" value="1"/>
</dbReference>
<comment type="subunit">
    <text evidence="1">Part of the 30S ribosomal subunit.</text>
</comment>
<comment type="subcellular location">
    <subcellularLocation>
        <location>Plastid</location>
        <location>Chloroplast</location>
    </subcellularLocation>
</comment>
<comment type="similarity">
    <text evidence="2">Belongs to the universal ribosomal protein uS15 family.</text>
</comment>
<reference key="1">
    <citation type="journal article" date="2006" name="BMC Evol. Biol.">
        <title>Complete plastid genome sequences of Drimys, Liriodendron, and Piper: implications for the phylogenetic relationships of magnoliids.</title>
        <authorList>
            <person name="Cai Z."/>
            <person name="Penaflor C."/>
            <person name="Kuehl J.V."/>
            <person name="Leebens-Mack J."/>
            <person name="Carlson J.E."/>
            <person name="dePamphilis C.W."/>
            <person name="Boore J.L."/>
            <person name="Jansen R.K."/>
        </authorList>
    </citation>
    <scope>NUCLEOTIDE SEQUENCE [LARGE SCALE GENOMIC DNA]</scope>
</reference>
<organism>
    <name type="scientific">Liriodendron tulipifera</name>
    <name type="common">Tuliptree</name>
    <name type="synonym">Tulip poplar</name>
    <dbReference type="NCBI Taxonomy" id="3415"/>
    <lineage>
        <taxon>Eukaryota</taxon>
        <taxon>Viridiplantae</taxon>
        <taxon>Streptophyta</taxon>
        <taxon>Embryophyta</taxon>
        <taxon>Tracheophyta</taxon>
        <taxon>Spermatophyta</taxon>
        <taxon>Magnoliopsida</taxon>
        <taxon>Magnoliidae</taxon>
        <taxon>Magnoliales</taxon>
        <taxon>Magnoliaceae</taxon>
        <taxon>Liriodendron</taxon>
    </lineage>
</organism>
<name>RR15_LIRTU</name>
<protein>
    <recommendedName>
        <fullName evidence="2">Small ribosomal subunit protein uS15c</fullName>
    </recommendedName>
    <alternativeName>
        <fullName>30S ribosomal protein S15, chloroplastic</fullName>
    </alternativeName>
</protein>